<comment type="similarity">
    <text evidence="1">Belongs to the bacterial ribosomal protein bS16 family.</text>
</comment>
<dbReference type="EMBL" id="AM711867">
    <property type="protein sequence ID" value="CAN01412.1"/>
    <property type="molecule type" value="Genomic_DNA"/>
</dbReference>
<dbReference type="RefSeq" id="WP_012038053.1">
    <property type="nucleotide sequence ID" value="NC_009480.1"/>
</dbReference>
<dbReference type="SMR" id="A5CQQ8"/>
<dbReference type="KEGG" id="cmi:CMM_1367"/>
<dbReference type="eggNOG" id="COG0228">
    <property type="taxonomic scope" value="Bacteria"/>
</dbReference>
<dbReference type="HOGENOM" id="CLU_100590_1_1_11"/>
<dbReference type="OrthoDB" id="9807878at2"/>
<dbReference type="Proteomes" id="UP000001564">
    <property type="component" value="Chromosome"/>
</dbReference>
<dbReference type="GO" id="GO:0005737">
    <property type="term" value="C:cytoplasm"/>
    <property type="evidence" value="ECO:0007669"/>
    <property type="project" value="UniProtKB-ARBA"/>
</dbReference>
<dbReference type="GO" id="GO:0015935">
    <property type="term" value="C:small ribosomal subunit"/>
    <property type="evidence" value="ECO:0007669"/>
    <property type="project" value="TreeGrafter"/>
</dbReference>
<dbReference type="GO" id="GO:0003735">
    <property type="term" value="F:structural constituent of ribosome"/>
    <property type="evidence" value="ECO:0007669"/>
    <property type="project" value="InterPro"/>
</dbReference>
<dbReference type="GO" id="GO:0006412">
    <property type="term" value="P:translation"/>
    <property type="evidence" value="ECO:0007669"/>
    <property type="project" value="UniProtKB-UniRule"/>
</dbReference>
<dbReference type="Gene3D" id="3.30.1320.10">
    <property type="match status" value="1"/>
</dbReference>
<dbReference type="HAMAP" id="MF_00385">
    <property type="entry name" value="Ribosomal_bS16"/>
    <property type="match status" value="1"/>
</dbReference>
<dbReference type="InterPro" id="IPR000307">
    <property type="entry name" value="Ribosomal_bS16"/>
</dbReference>
<dbReference type="InterPro" id="IPR020592">
    <property type="entry name" value="Ribosomal_bS16_CS"/>
</dbReference>
<dbReference type="InterPro" id="IPR023803">
    <property type="entry name" value="Ribosomal_bS16_dom_sf"/>
</dbReference>
<dbReference type="NCBIfam" id="NF011093">
    <property type="entry name" value="PRK14520.1"/>
    <property type="match status" value="1"/>
</dbReference>
<dbReference type="NCBIfam" id="TIGR00002">
    <property type="entry name" value="S16"/>
    <property type="match status" value="1"/>
</dbReference>
<dbReference type="PANTHER" id="PTHR12919">
    <property type="entry name" value="30S RIBOSOMAL PROTEIN S16"/>
    <property type="match status" value="1"/>
</dbReference>
<dbReference type="PANTHER" id="PTHR12919:SF20">
    <property type="entry name" value="SMALL RIBOSOMAL SUBUNIT PROTEIN BS16M"/>
    <property type="match status" value="1"/>
</dbReference>
<dbReference type="Pfam" id="PF00886">
    <property type="entry name" value="Ribosomal_S16"/>
    <property type="match status" value="1"/>
</dbReference>
<dbReference type="SUPFAM" id="SSF54565">
    <property type="entry name" value="Ribosomal protein S16"/>
    <property type="match status" value="1"/>
</dbReference>
<dbReference type="PROSITE" id="PS00732">
    <property type="entry name" value="RIBOSOMAL_S16"/>
    <property type="match status" value="1"/>
</dbReference>
<evidence type="ECO:0000255" key="1">
    <source>
        <dbReference type="HAMAP-Rule" id="MF_00385"/>
    </source>
</evidence>
<evidence type="ECO:0000256" key="2">
    <source>
        <dbReference type="SAM" id="MobiDB-lite"/>
    </source>
</evidence>
<evidence type="ECO:0000305" key="3"/>
<keyword id="KW-0687">Ribonucleoprotein</keyword>
<keyword id="KW-0689">Ribosomal protein</keyword>
<name>RS16_CLAM3</name>
<sequence length="137" mass="15348">MAVKIRLKRLGKIRAPYYRIVVADSRTKRDGRVIEEIGKYHPTEEPSFIEVQSERAQYWLSVGAQPTEQVEALLKLTGDWGRFKGDKDAVSTVRVREAKPAYVADEKKKPVLKPKTEKAAPAPEAAAPEAESTEEQA</sequence>
<accession>A5CQQ8</accession>
<gene>
    <name evidence="1" type="primary">rpsP</name>
    <name type="ordered locus">CMM_1367</name>
</gene>
<reference key="1">
    <citation type="journal article" date="2008" name="J. Bacteriol.">
        <title>The genome sequence of the tomato-pathogenic actinomycete Clavibacter michiganensis subsp. michiganensis NCPPB382 reveals a large island involved in pathogenicity.</title>
        <authorList>
            <person name="Gartemann K.-H."/>
            <person name="Abt B."/>
            <person name="Bekel T."/>
            <person name="Burger A."/>
            <person name="Engemann J."/>
            <person name="Fluegel M."/>
            <person name="Gaigalat L."/>
            <person name="Goesmann A."/>
            <person name="Graefen I."/>
            <person name="Kalinowski J."/>
            <person name="Kaup O."/>
            <person name="Kirchner O."/>
            <person name="Krause L."/>
            <person name="Linke B."/>
            <person name="McHardy A."/>
            <person name="Meyer F."/>
            <person name="Pohle S."/>
            <person name="Rueckert C."/>
            <person name="Schneiker S."/>
            <person name="Zellermann E.-M."/>
            <person name="Puehler A."/>
            <person name="Eichenlaub R."/>
            <person name="Kaiser O."/>
            <person name="Bartels D."/>
        </authorList>
    </citation>
    <scope>NUCLEOTIDE SEQUENCE [LARGE SCALE GENOMIC DNA]</scope>
    <source>
        <strain>NCPPB 382</strain>
    </source>
</reference>
<organism>
    <name type="scientific">Clavibacter michiganensis subsp. michiganensis (strain NCPPB 382)</name>
    <dbReference type="NCBI Taxonomy" id="443906"/>
    <lineage>
        <taxon>Bacteria</taxon>
        <taxon>Bacillati</taxon>
        <taxon>Actinomycetota</taxon>
        <taxon>Actinomycetes</taxon>
        <taxon>Micrococcales</taxon>
        <taxon>Microbacteriaceae</taxon>
        <taxon>Clavibacter</taxon>
    </lineage>
</organism>
<proteinExistence type="inferred from homology"/>
<protein>
    <recommendedName>
        <fullName evidence="1">Small ribosomal subunit protein bS16</fullName>
    </recommendedName>
    <alternativeName>
        <fullName evidence="3">30S ribosomal protein S16</fullName>
    </alternativeName>
</protein>
<feature type="chain" id="PRO_1000049240" description="Small ribosomal subunit protein bS16">
    <location>
        <begin position="1"/>
        <end position="137"/>
    </location>
</feature>
<feature type="region of interest" description="Disordered" evidence="2">
    <location>
        <begin position="104"/>
        <end position="137"/>
    </location>
</feature>
<feature type="compositionally biased region" description="Basic and acidic residues" evidence="2">
    <location>
        <begin position="104"/>
        <end position="118"/>
    </location>
</feature>
<feature type="compositionally biased region" description="Low complexity" evidence="2">
    <location>
        <begin position="119"/>
        <end position="130"/>
    </location>
</feature>